<comment type="function">
    <text evidence="2 3 4 5">Involved in the degradation of arabinan and is a key enzyme in the complete degradation of the plant cell wall. Catalyzes the cleavage of terminal alpha-(1-&gt;5)-arabinofuranosyl bonds in different hemicellulosic homopolysaccharides (branched and debranched arabinans). It acts preferentially on aryl-alpha-L-arabinofuranosides, and is much less effective on aryl-beta-D-xylopyranosides.</text>
</comment>
<comment type="catalytic activity">
    <reaction evidence="3 4">
        <text>Hydrolysis of terminal non-reducing alpha-L-arabinofuranoside residues in alpha-L-arabinosides.</text>
        <dbReference type="EC" id="3.2.1.55"/>
    </reaction>
</comment>
<comment type="activity regulation">
    <text evidence="5">Strongly inhibited by Hg(2+).</text>
</comment>
<comment type="biophysicochemical properties">
    <kinetics>
        <KM evidence="2 3 5">0.35 mM for 2,5-dinitro-arabinofuranosyl</KM>
        <KM evidence="2 3 5">0.42 mM for p-nitrophenyl alpha-L-arabinofuranoside (pNP-Araf) (at 60 degrees Celsius and at pH 6)</KM>
        <KM evidence="2 3 5">0.53 mM for 3,4-dinitro-arabinofuranosyl</KM>
        <KM evidence="2 3 5">0.65 mM for 4-nitro-arabinofuranosyl</KM>
        <KM evidence="2 3 5">4.4 mM for 3,4-dinitro-xylopyranosyl</KM>
        <KM evidence="2 3 5">8 mM for 2,5-dinitro-xylopyranosyl</KM>
        <KM evidence="2 3 5">15.3 mM for 2-nitro-xylopyranosyl</KM>
        <Vmax evidence="2 3 5">749.0 umol/min/mg enzyme (at 60 degrees Celsius and at pH 6)</Vmax>
        <text evidence="4">Apparently, AbfA can accommodate xylopyranose in the active site, but without the necessary distortion required for the efficient catalysis of six-membered rings. This explains in part its lower specificity towards the xylopyranosidic substrates.</text>
    </kinetics>
    <phDependence>
        <text evidence="2 3 5">Optimum pH is 5.5-6.0.</text>
    </phDependence>
    <temperatureDependence>
        <text evidence="2 3 5">Optimum temperature is 70 degrees Celsius.</text>
    </temperatureDependence>
</comment>
<comment type="pathway">
    <text>Glycan metabolism; L-arabinan degradation.</text>
</comment>
<comment type="subunit">
    <text evidence="4 9 11">Homohexamer; trimer of dimers.</text>
</comment>
<comment type="subcellular location">
    <subcellularLocation>
        <location evidence="1">Cytoplasm</location>
    </subcellularLocation>
</comment>
<comment type="induction">
    <text evidence="11">Transcription is repressed by glucose and by the binding of AraR to the operon promoter. L-arabinose acts as an inducer by inhibiting the binding of AraR to the DNA, thus allowing expression of the gene (Probable).</text>
</comment>
<comment type="similarity">
    <text evidence="6">Belongs to the glycosyl hydrolase 51 family.</text>
</comment>
<sequence>MATKKATMIIEKDFKIAEIDKRIYGSFIEHLGRAVYGGIYEPGHPQADENGFRQDVIELVKELQVPIIRYPGGNFVSGYNWEDGVGPKEQRPRRLDLAWKSVETNEIGLNEFMDWAKMVGAEVNMAVNLGTRGIDAARNLVEYCNHPSGSYYSDLRIAHGYKEPHKIKTWCLGNEMDGPWQIGHKTAVEYGRIACEAAKVMKWVDPTIELVVCGSSNRNMPTFAEWEATVLDHTYDHVDYISLHQYYGNRDNDTANYLALSLEMDDFIRSVVAIADYVKAKKRSKKTIHLSFDEWNVWYHSNEADKLIEPWTVAPPLLEDIYNFEDALLVGCMLITLMKHADRVKIACLAQLVNVIAPIMTEKNGPAWKQTIYYPFMHASVYGRGVALHPVISSPKYDSKDFTDVPYLESIAVYNEEKEEVTIFAVNRDMEDALLLECDVRSFEDYRVIEHIVLEHDNVKQTNSAQSSPVVPHRNGDAQLSDRKVSATLPKLSWNVIRLGKR</sequence>
<gene>
    <name type="primary">abfA</name>
</gene>
<name>IABF_GEOSE</name>
<organism>
    <name type="scientific">Geobacillus stearothermophilus</name>
    <name type="common">Bacillus stearothermophilus</name>
    <dbReference type="NCBI Taxonomy" id="1422"/>
    <lineage>
        <taxon>Bacteria</taxon>
        <taxon>Bacillati</taxon>
        <taxon>Bacillota</taxon>
        <taxon>Bacilli</taxon>
        <taxon>Bacillales</taxon>
        <taxon>Anoxybacillaceae</taxon>
        <taxon>Geobacillus</taxon>
    </lineage>
</organism>
<accession>Q9XBQ3</accession>
<protein>
    <recommendedName>
        <fullName>Intracellular exo-alpha-(1-&gt;5)-L-arabinofuranosidase</fullName>
        <shortName>ABF</shortName>
        <ecNumber>3.2.1.55</ecNumber>
    </recommendedName>
    <alternativeName>
        <fullName>Intracellular arabinan exo-alpha-(1-&gt;5)-L-arabinosidase</fullName>
        <shortName>Arabinosidase</shortName>
    </alternativeName>
</protein>
<dbReference type="EC" id="3.2.1.55"/>
<dbReference type="EMBL" id="AF159625">
    <property type="protein sequence ID" value="AAD45520.2"/>
    <property type="molecule type" value="Genomic_DNA"/>
</dbReference>
<dbReference type="PDB" id="1PZ2">
    <property type="method" value="X-ray"/>
    <property type="resolution" value="2.00 A"/>
    <property type="chains" value="A/B=1-502"/>
</dbReference>
<dbReference type="PDB" id="1PZ3">
    <property type="method" value="X-ray"/>
    <property type="resolution" value="1.75 A"/>
    <property type="chains" value="A/B=1-502"/>
</dbReference>
<dbReference type="PDB" id="1QW8">
    <property type="method" value="X-ray"/>
    <property type="resolution" value="1.80 A"/>
    <property type="chains" value="A/B=1-502"/>
</dbReference>
<dbReference type="PDB" id="1QW9">
    <property type="method" value="X-ray"/>
    <property type="resolution" value="1.20 A"/>
    <property type="chains" value="A/B=1-502"/>
</dbReference>
<dbReference type="PDB" id="6SXU">
    <property type="method" value="X-ray"/>
    <property type="resolution" value="1.40 A"/>
    <property type="chains" value="AAA/BBB=1-502"/>
</dbReference>
<dbReference type="PDB" id="6SXV">
    <property type="method" value="X-ray"/>
    <property type="resolution" value="1.40 A"/>
    <property type="chains" value="A/B=1-502"/>
</dbReference>
<dbReference type="PDBsum" id="1PZ2"/>
<dbReference type="PDBsum" id="1PZ3"/>
<dbReference type="PDBsum" id="1QW8"/>
<dbReference type="PDBsum" id="1QW9"/>
<dbReference type="PDBsum" id="6SXU"/>
<dbReference type="PDBsum" id="6SXV"/>
<dbReference type="SMR" id="Q9XBQ3"/>
<dbReference type="DrugBank" id="DB03196">
    <property type="generic name" value="4-Nitrophenyl-Ara"/>
</dbReference>
<dbReference type="DrugBank" id="DB03870">
    <property type="generic name" value="Ara-Alpha(1,3)-Xyl"/>
</dbReference>
<dbReference type="CAZy" id="GH51">
    <property type="family name" value="Glycoside Hydrolase Family 51"/>
</dbReference>
<dbReference type="BRENDA" id="3.2.1.55">
    <property type="organism ID" value="623"/>
</dbReference>
<dbReference type="UniPathway" id="UPA00667"/>
<dbReference type="EvolutionaryTrace" id="Q9XBQ3"/>
<dbReference type="GO" id="GO:0005737">
    <property type="term" value="C:cytoplasm"/>
    <property type="evidence" value="ECO:0007669"/>
    <property type="project" value="UniProtKB-SubCell"/>
</dbReference>
<dbReference type="GO" id="GO:0046556">
    <property type="term" value="F:alpha-L-arabinofuranosidase activity"/>
    <property type="evidence" value="ECO:0007669"/>
    <property type="project" value="UniProtKB-EC"/>
</dbReference>
<dbReference type="GO" id="GO:0031222">
    <property type="term" value="P:arabinan catabolic process"/>
    <property type="evidence" value="ECO:0007669"/>
    <property type="project" value="UniProtKB-UniPathway"/>
</dbReference>
<dbReference type="GO" id="GO:0046373">
    <property type="term" value="P:L-arabinose metabolic process"/>
    <property type="evidence" value="ECO:0007669"/>
    <property type="project" value="InterPro"/>
</dbReference>
<dbReference type="Gene3D" id="3.20.20.80">
    <property type="entry name" value="Glycosidases"/>
    <property type="match status" value="1"/>
</dbReference>
<dbReference type="Gene3D" id="2.60.40.1180">
    <property type="entry name" value="Golgi alpha-mannosidase II"/>
    <property type="match status" value="1"/>
</dbReference>
<dbReference type="InterPro" id="IPR010720">
    <property type="entry name" value="Alpha-L-AF_C"/>
</dbReference>
<dbReference type="InterPro" id="IPR013780">
    <property type="entry name" value="Glyco_hydro_b"/>
</dbReference>
<dbReference type="InterPro" id="IPR017853">
    <property type="entry name" value="Glycoside_hydrolase_SF"/>
</dbReference>
<dbReference type="PANTHER" id="PTHR43576:SF3">
    <property type="entry name" value="ALPHA-L-ARABINOFURANOSIDASE C"/>
    <property type="match status" value="1"/>
</dbReference>
<dbReference type="PANTHER" id="PTHR43576">
    <property type="entry name" value="ALPHA-L-ARABINOFURANOSIDASE C-RELATED"/>
    <property type="match status" value="1"/>
</dbReference>
<dbReference type="Pfam" id="PF06964">
    <property type="entry name" value="Alpha-L-AF_C"/>
    <property type="match status" value="1"/>
</dbReference>
<dbReference type="SMART" id="SM00813">
    <property type="entry name" value="Alpha-L-AF_C"/>
    <property type="match status" value="1"/>
</dbReference>
<dbReference type="SUPFAM" id="SSF51445">
    <property type="entry name" value="(Trans)glycosidases"/>
    <property type="match status" value="1"/>
</dbReference>
<dbReference type="SUPFAM" id="SSF51011">
    <property type="entry name" value="Glycosyl hydrolase domain"/>
    <property type="match status" value="1"/>
</dbReference>
<keyword id="KW-0002">3D-structure</keyword>
<keyword id="KW-0119">Carbohydrate metabolism</keyword>
<keyword id="KW-0963">Cytoplasm</keyword>
<keyword id="KW-0903">Direct protein sequencing</keyword>
<keyword id="KW-0326">Glycosidase</keyword>
<keyword id="KW-0378">Hydrolase</keyword>
<evidence type="ECO:0000250" key="1">
    <source>
        <dbReference type="UniProtKB" id="P94531"/>
    </source>
</evidence>
<evidence type="ECO:0000269" key="2">
    <source>
    </source>
</evidence>
<evidence type="ECO:0000269" key="3">
    <source>
    </source>
</evidence>
<evidence type="ECO:0000269" key="4">
    <source>
    </source>
</evidence>
<evidence type="ECO:0000269" key="5">
    <source>
    </source>
</evidence>
<evidence type="ECO:0000305" key="6"/>
<evidence type="ECO:0000305" key="7">
    <source>
    </source>
</evidence>
<evidence type="ECO:0000305" key="8">
    <source>
    </source>
</evidence>
<evidence type="ECO:0000305" key="9">
    <source>
    </source>
</evidence>
<evidence type="ECO:0000305" key="10">
    <source>
    </source>
</evidence>
<evidence type="ECO:0000305" key="11">
    <source>
    </source>
</evidence>
<evidence type="ECO:0007744" key="12">
    <source>
        <dbReference type="PDB" id="1PZ2"/>
    </source>
</evidence>
<evidence type="ECO:0007744" key="13">
    <source>
        <dbReference type="PDB" id="1PZ3"/>
    </source>
</evidence>
<evidence type="ECO:0007744" key="14">
    <source>
        <dbReference type="PDB" id="1QW8"/>
    </source>
</evidence>
<evidence type="ECO:0007744" key="15">
    <source>
        <dbReference type="PDB" id="1QW9"/>
    </source>
</evidence>
<evidence type="ECO:0007829" key="16">
    <source>
        <dbReference type="PDB" id="1PZ3"/>
    </source>
</evidence>
<evidence type="ECO:0007829" key="17">
    <source>
        <dbReference type="PDB" id="1QW9"/>
    </source>
</evidence>
<reference key="1">
    <citation type="submission" date="2001-11" db="EMBL/GenBank/DDBJ databases">
        <authorList>
            <person name="Gilead-Gropper S."/>
            <person name="Gat O."/>
            <person name="Alchanati I."/>
            <person name="Yaron S."/>
            <person name="Bren A."/>
            <person name="Shoham Y."/>
        </authorList>
    </citation>
    <scope>NUCLEOTIDE SEQUENCE [GENOMIC DNA]</scope>
    <source>
        <strain>T-6 / NCIMB 40222</strain>
    </source>
</reference>
<reference key="2">
    <citation type="journal article" date="1995" name="Appl. Environ. Microbiol.">
        <title>Purification and characterization of alpha-L-arabinofuranosidase from Bacillus stearothermophilus T-6.</title>
        <authorList>
            <person name="Gilead S."/>
            <person name="Shoham Y."/>
        </authorList>
    </citation>
    <scope>PROTEIN SEQUENCE OF 2-51</scope>
    <scope>FUNCTION</scope>
    <scope>ACTIVITY REGULATION</scope>
    <scope>BIOPHYSICOCHEMICAL PROPERTIES</scope>
    <scope>INDUCTION</scope>
    <scope>SUBUNIT</scope>
    <source>
        <strain>T-6 / NCIMB 40222</strain>
    </source>
</reference>
<reference key="3">
    <citation type="journal article" date="2002" name="FEBS Lett.">
        <title>The identification of the acid-base catalyst of alpha-arabinofuranosidase from Geobacillus stearothermophilus T-6, a family 51 glycoside hydrolase.</title>
        <authorList>
            <person name="Shallom D."/>
            <person name="Belakhov V."/>
            <person name="Solomon D."/>
            <person name="Gilead-Gropper S."/>
            <person name="Baasov T."/>
            <person name="Shoham G."/>
            <person name="Shoham Y."/>
        </authorList>
    </citation>
    <scope>FUNCTION</scope>
    <scope>MUTAGENESIS OF GLU-175</scope>
    <scope>ACTIVE SITE</scope>
    <scope>BIOPHYSICOCHEMICAL PROPERTIES</scope>
    <scope>REACTION MECHANISM</scope>
</reference>
<reference key="4">
    <citation type="journal article" date="2002" name="J. Biol. Chem.">
        <title>Detailed kinetic analysis and identification of the nucleophile in alpha-L-arabinofuranosidase from Geobacillus stearothermophilus T-6, a family 51 glycoside hydrolase.</title>
        <authorList>
            <person name="Shallom D."/>
            <person name="Belakhov V."/>
            <person name="Solomon D."/>
            <person name="Shoham G."/>
            <person name="Baasov T."/>
            <person name="Shoham Y."/>
        </authorList>
    </citation>
    <scope>FUNCTION</scope>
    <scope>CATALYTIC ACTIVITY</scope>
    <scope>MUTAGENESIS OF GLU-175 AND GLU-294</scope>
    <scope>ACTIVE SITE</scope>
    <scope>BIOPHYSICOCHEMICAL PROPERTIES</scope>
    <scope>REACTION MECHANISM</scope>
</reference>
<reference key="5">
    <citation type="journal article" date="2003" name="Acta Crystallogr. D">
        <title>Crystallization and preliminary X-ray analysis of a family 51 glycoside hydrolase, the alpha-l-arabinofuranosidase from Geobacillus stearothermophilus T-6.</title>
        <authorList>
            <person name="Hovel K."/>
            <person name="Shallom D."/>
            <person name="Niefind K."/>
            <person name="Baasov T."/>
            <person name="Shoham G."/>
            <person name="Shoham Y."/>
            <person name="Schomburg D."/>
        </authorList>
    </citation>
    <scope>SUBUNIT</scope>
</reference>
<reference evidence="12 13 14 15" key="6">
    <citation type="journal article" date="2003" name="EMBO J.">
        <title>Crystal structure and snapshots along the reaction pathway of a family 51 alpha-L-arabinofuranosidase.</title>
        <authorList>
            <person name="Hovel K."/>
            <person name="Shallom D."/>
            <person name="Niefind K."/>
            <person name="Belakhov V."/>
            <person name="Shoham G."/>
            <person name="Baasov T."/>
            <person name="Shoham Y."/>
            <person name="Schomburg D."/>
        </authorList>
    </citation>
    <scope>X-RAY CRYSTALLOGRAPHY (2.0 ANGSTROMS) OF WILD-TYPE AND MUTANT ALA-175 IN COMPLEXES WITH FURANOSIDIC SUBSTRATES</scope>
    <scope>FUNCTION</scope>
    <scope>CATALYTIC ACTIVITY</scope>
    <scope>MUTAGENESIS OF GLU-175</scope>
    <scope>REACTION MECHANISM</scope>
    <scope>ACTIVE SITE</scope>
    <scope>BIOPHYSICOCHEMICAL PROPERTIES</scope>
    <scope>SUBSTRATE SPECIFICITY</scope>
    <scope>SUBUNIT</scope>
</reference>
<proteinExistence type="evidence at protein level"/>
<feature type="initiator methionine" description="Removed" evidence="5">
    <location>
        <position position="1"/>
    </location>
</feature>
<feature type="chain" id="PRO_0000057700" description="Intracellular exo-alpha-(1-&gt;5)-L-arabinofuranosidase">
    <location>
        <begin position="2"/>
        <end position="502"/>
    </location>
</feature>
<feature type="active site" description="Proton donor/acceptor" evidence="7 8 10">
    <location>
        <position position="175"/>
    </location>
</feature>
<feature type="active site" description="Nucleophile" evidence="8 10">
    <location>
        <position position="294"/>
    </location>
</feature>
<feature type="binding site" evidence="4 12 14 15">
    <location>
        <position position="29"/>
    </location>
    <ligand>
        <name>alpha-L-arabinofuranose</name>
        <dbReference type="ChEBI" id="CHEBI:28772"/>
    </ligand>
</feature>
<feature type="binding site" evidence="4 12 14 15">
    <location>
        <position position="74"/>
    </location>
    <ligand>
        <name>alpha-L-arabinofuranose</name>
        <dbReference type="ChEBI" id="CHEBI:28772"/>
    </ligand>
</feature>
<feature type="binding site" evidence="4 12 15">
    <location>
        <position position="174"/>
    </location>
    <ligand>
        <name>alpha-L-arabinofuranose</name>
        <dbReference type="ChEBI" id="CHEBI:28772"/>
    </ligand>
</feature>
<feature type="binding site" evidence="4 12 14 15">
    <location>
        <position position="246"/>
    </location>
    <ligand>
        <name>alpha-L-arabinofuranose</name>
        <dbReference type="ChEBI" id="CHEBI:28772"/>
    </ligand>
</feature>
<feature type="binding site" description="covalent" evidence="4 12 14 15">
    <location>
        <position position="294"/>
    </location>
    <ligand>
        <name>alpha-L-arabinofuranose</name>
        <dbReference type="ChEBI" id="CHEBI:28772"/>
    </ligand>
</feature>
<feature type="binding site" evidence="4 14 15">
    <location>
        <position position="351"/>
    </location>
    <ligand>
        <name>alpha-L-arabinofuranose</name>
        <dbReference type="ChEBI" id="CHEBI:28772"/>
    </ligand>
</feature>
<feature type="site" description="Important for substrate recognition" evidence="10">
    <location>
        <position position="298"/>
    </location>
</feature>
<feature type="site" description="Important for substrate recognition" evidence="10">
    <location>
        <position position="351"/>
    </location>
</feature>
<feature type="mutagenesis site" description="Strongly reduced catalytic activity. Increases affinity for substrates. The mutant has an effect on the glycosylation step. The removal of the acid-base catalyst seems to have affected the ionization state of the nucleophile, elevating its pKa, reducing its acidity, and shifting the optimal pH to higher values." evidence="2 3 4">
    <original>E</original>
    <variation>A</variation>
    <location>
        <position position="175"/>
    </location>
</feature>
<feature type="mutagenesis site" description="Abolishes catalytic activity, but the binding affinity shows only a small change." evidence="3">
    <original>E</original>
    <variation>A</variation>
    <location>
        <position position="294"/>
    </location>
</feature>
<feature type="strand" evidence="17">
    <location>
        <begin position="6"/>
        <end position="9"/>
    </location>
</feature>
<feature type="strand" evidence="17">
    <location>
        <begin position="14"/>
        <end position="18"/>
    </location>
</feature>
<feature type="helix" evidence="17">
    <location>
        <begin position="21"/>
        <end position="24"/>
    </location>
</feature>
<feature type="strand" evidence="17">
    <location>
        <begin position="25"/>
        <end position="27"/>
    </location>
</feature>
<feature type="turn" evidence="17">
    <location>
        <begin position="37"/>
        <end position="39"/>
    </location>
</feature>
<feature type="strand" evidence="17">
    <location>
        <begin position="51"/>
        <end position="53"/>
    </location>
</feature>
<feature type="helix" evidence="17">
    <location>
        <begin position="54"/>
        <end position="62"/>
    </location>
</feature>
<feature type="strand" evidence="17">
    <location>
        <begin position="67"/>
        <end position="71"/>
    </location>
</feature>
<feature type="helix" evidence="17">
    <location>
        <begin position="74"/>
        <end position="78"/>
    </location>
</feature>
<feature type="helix" evidence="17">
    <location>
        <begin position="81"/>
        <end position="84"/>
    </location>
</feature>
<feature type="helix" evidence="17">
    <location>
        <begin position="88"/>
        <end position="90"/>
    </location>
</feature>
<feature type="strand" evidence="17">
    <location>
        <begin position="94"/>
        <end position="96"/>
    </location>
</feature>
<feature type="turn" evidence="17">
    <location>
        <begin position="97"/>
        <end position="100"/>
    </location>
</feature>
<feature type="strand" evidence="17">
    <location>
        <begin position="101"/>
        <end position="103"/>
    </location>
</feature>
<feature type="helix" evidence="17">
    <location>
        <begin position="109"/>
        <end position="119"/>
    </location>
</feature>
<feature type="strand" evidence="17">
    <location>
        <begin position="122"/>
        <end position="127"/>
    </location>
</feature>
<feature type="helix" evidence="17">
    <location>
        <begin position="134"/>
        <end position="145"/>
    </location>
</feature>
<feature type="strand" evidence="17">
    <location>
        <begin position="148"/>
        <end position="150"/>
    </location>
</feature>
<feature type="helix" evidence="17">
    <location>
        <begin position="151"/>
        <end position="158"/>
    </location>
</feature>
<feature type="strand" evidence="17">
    <location>
        <begin position="169"/>
        <end position="174"/>
    </location>
</feature>
<feature type="helix" evidence="17">
    <location>
        <begin position="187"/>
        <end position="204"/>
    </location>
</feature>
<feature type="strand" evidence="17">
    <location>
        <begin position="209"/>
        <end position="212"/>
    </location>
</feature>
<feature type="turn" evidence="17">
    <location>
        <begin position="221"/>
        <end position="224"/>
    </location>
</feature>
<feature type="helix" evidence="17">
    <location>
        <begin position="225"/>
        <end position="234"/>
    </location>
</feature>
<feature type="helix" evidence="17">
    <location>
        <begin position="235"/>
        <end position="237"/>
    </location>
</feature>
<feature type="strand" evidence="17">
    <location>
        <begin position="239"/>
        <end position="247"/>
    </location>
</feature>
<feature type="helix" evidence="17">
    <location>
        <begin position="254"/>
        <end position="258"/>
    </location>
</feature>
<feature type="helix" evidence="17">
    <location>
        <begin position="261"/>
        <end position="282"/>
    </location>
</feature>
<feature type="strand" evidence="17">
    <location>
        <begin position="289"/>
        <end position="297"/>
    </location>
</feature>
<feature type="helix" evidence="17">
    <location>
        <begin position="302"/>
        <end position="305"/>
    </location>
</feature>
<feature type="strand" evidence="17">
    <location>
        <begin position="312"/>
        <end position="314"/>
    </location>
</feature>
<feature type="helix" evidence="17">
    <location>
        <begin position="324"/>
        <end position="339"/>
    </location>
</feature>
<feature type="turn" evidence="17">
    <location>
        <begin position="340"/>
        <end position="343"/>
    </location>
</feature>
<feature type="strand" evidence="17">
    <location>
        <begin position="344"/>
        <end position="350"/>
    </location>
</feature>
<feature type="strand" evidence="17">
    <location>
        <begin position="352"/>
        <end position="356"/>
    </location>
</feature>
<feature type="strand" evidence="17">
    <location>
        <begin position="358"/>
        <end position="361"/>
    </location>
</feature>
<feature type="strand" evidence="17">
    <location>
        <begin position="367"/>
        <end position="369"/>
    </location>
</feature>
<feature type="helix" evidence="17">
    <location>
        <begin position="373"/>
        <end position="382"/>
    </location>
</feature>
<feature type="strand" evidence="17">
    <location>
        <begin position="385"/>
        <end position="388"/>
    </location>
</feature>
<feature type="strand" evidence="17">
    <location>
        <begin position="391"/>
        <end position="393"/>
    </location>
</feature>
<feature type="strand" evidence="17">
    <location>
        <begin position="403"/>
        <end position="415"/>
    </location>
</feature>
<feature type="turn" evidence="17">
    <location>
        <begin position="416"/>
        <end position="419"/>
    </location>
</feature>
<feature type="strand" evidence="17">
    <location>
        <begin position="420"/>
        <end position="427"/>
    </location>
</feature>
<feature type="strand" evidence="16">
    <location>
        <begin position="430"/>
        <end position="432"/>
    </location>
</feature>
<feature type="strand" evidence="17">
    <location>
        <begin position="434"/>
        <end position="439"/>
    </location>
</feature>
<feature type="strand" evidence="17">
    <location>
        <begin position="447"/>
        <end position="454"/>
    </location>
</feature>
<feature type="strand" evidence="16">
    <location>
        <begin position="473"/>
        <end position="475"/>
    </location>
</feature>
<feature type="strand" evidence="17">
    <location>
        <begin position="479"/>
        <end position="481"/>
    </location>
</feature>
<feature type="strand" evidence="17">
    <location>
        <begin position="484"/>
        <end position="489"/>
    </location>
</feature>
<feature type="strand" evidence="17">
    <location>
        <begin position="491"/>
        <end position="500"/>
    </location>
</feature>